<accession>Q3ZC78</accession>
<dbReference type="EMBL" id="BC102856">
    <property type="protein sequence ID" value="AAI02857.1"/>
    <property type="molecule type" value="mRNA"/>
</dbReference>
<dbReference type="RefSeq" id="NP_001181991.1">
    <property type="nucleotide sequence ID" value="NM_001195062.1"/>
</dbReference>
<dbReference type="RefSeq" id="XP_010817241.1">
    <property type="nucleotide sequence ID" value="XM_010818939.4"/>
</dbReference>
<dbReference type="RefSeq" id="XP_010817242.1">
    <property type="nucleotide sequence ID" value="XM_010818940.4"/>
</dbReference>
<dbReference type="RefSeq" id="XP_010817243.1">
    <property type="nucleotide sequence ID" value="XM_010818941.4"/>
</dbReference>
<dbReference type="FunCoup" id="Q3ZC78">
    <property type="interactions" value="1240"/>
</dbReference>
<dbReference type="STRING" id="9913.ENSBTAP00000028439"/>
<dbReference type="PaxDb" id="9913-ENSBTAP00000028439"/>
<dbReference type="Ensembl" id="ENSBTAT00000028439.6">
    <property type="protein sequence ID" value="ENSBTAP00000028439.5"/>
    <property type="gene ID" value="ENSBTAG00000021334.6"/>
</dbReference>
<dbReference type="GeneID" id="767921"/>
<dbReference type="KEGG" id="bta:767921"/>
<dbReference type="CTD" id="767921"/>
<dbReference type="VEuPathDB" id="HostDB:ENSBTAG00000021334"/>
<dbReference type="VGNC" id="VGNC:52682">
    <property type="gene designation" value="C24H18orf32"/>
</dbReference>
<dbReference type="eggNOG" id="ENOG502S738">
    <property type="taxonomic scope" value="Eukaryota"/>
</dbReference>
<dbReference type="GeneTree" id="ENSGT00390000018741"/>
<dbReference type="HOGENOM" id="CLU_191635_0_0_1"/>
<dbReference type="InParanoid" id="Q3ZC78"/>
<dbReference type="OMA" id="SRIWPGK"/>
<dbReference type="OrthoDB" id="10062823at2759"/>
<dbReference type="TreeFam" id="TF324662"/>
<dbReference type="Proteomes" id="UP000009136">
    <property type="component" value="Chromosome 24"/>
</dbReference>
<dbReference type="Bgee" id="ENSBTAG00000021334">
    <property type="expression patterns" value="Expressed in oocyte and 105 other cell types or tissues"/>
</dbReference>
<dbReference type="GO" id="GO:0005783">
    <property type="term" value="C:endoplasmic reticulum"/>
    <property type="evidence" value="ECO:0000250"/>
    <property type="project" value="UniProtKB"/>
</dbReference>
<dbReference type="GO" id="GO:0005811">
    <property type="term" value="C:lipid droplet"/>
    <property type="evidence" value="ECO:0000250"/>
    <property type="project" value="UniProtKB"/>
</dbReference>
<dbReference type="InterPro" id="IPR026776">
    <property type="entry name" value="UPF0729_C18orf32-like"/>
</dbReference>
<dbReference type="PANTHER" id="PTHR13456">
    <property type="entry name" value="UPF0729 PROTEIN C18ORF32"/>
    <property type="match status" value="1"/>
</dbReference>
<dbReference type="PANTHER" id="PTHR13456:SF0">
    <property type="entry name" value="UPF0729 PROTEIN C18ORF32"/>
    <property type="match status" value="1"/>
</dbReference>
<dbReference type="Pfam" id="PF14975">
    <property type="entry name" value="DUF4512"/>
    <property type="match status" value="1"/>
</dbReference>
<organism>
    <name type="scientific">Bos taurus</name>
    <name type="common">Bovine</name>
    <dbReference type="NCBI Taxonomy" id="9913"/>
    <lineage>
        <taxon>Eukaryota</taxon>
        <taxon>Metazoa</taxon>
        <taxon>Chordata</taxon>
        <taxon>Craniata</taxon>
        <taxon>Vertebrata</taxon>
        <taxon>Euteleostomi</taxon>
        <taxon>Mammalia</taxon>
        <taxon>Eutheria</taxon>
        <taxon>Laurasiatheria</taxon>
        <taxon>Artiodactyla</taxon>
        <taxon>Ruminantia</taxon>
        <taxon>Pecora</taxon>
        <taxon>Bovidae</taxon>
        <taxon>Bovinae</taxon>
        <taxon>Bos</taxon>
    </lineage>
</organism>
<keyword id="KW-0256">Endoplasmic reticulum</keyword>
<keyword id="KW-0551">Lipid droplet</keyword>
<keyword id="KW-1185">Reference proteome</keyword>
<evidence type="ECO:0000250" key="1">
    <source>
        <dbReference type="UniProtKB" id="Q8TCD1"/>
    </source>
</evidence>
<evidence type="ECO:0000256" key="2">
    <source>
        <dbReference type="SAM" id="MobiDB-lite"/>
    </source>
</evidence>
<evidence type="ECO:0000305" key="3"/>
<protein>
    <recommendedName>
        <fullName>UPF0729 protein C18orf32 homolog</fullName>
    </recommendedName>
</protein>
<proteinExistence type="inferred from homology"/>
<name>CR032_BOVIN</name>
<comment type="function">
    <text evidence="1">May activate the NF-kappa-B signaling pathway.</text>
</comment>
<comment type="subunit">
    <text evidence="1">Interacts with DERL1 and AMFR.</text>
</comment>
<comment type="subcellular location">
    <subcellularLocation>
        <location evidence="1">Endoplasmic reticulum</location>
    </subcellularLocation>
    <subcellularLocation>
        <location evidence="1">Lipid droplet</location>
    </subcellularLocation>
</comment>
<comment type="PTM">
    <text evidence="1">Undergoes ER-associated degradation (ERAD).</text>
</comment>
<comment type="similarity">
    <text evidence="3">Belongs to the UPF0729 family.</text>
</comment>
<reference key="1">
    <citation type="submission" date="2005-08" db="EMBL/GenBank/DDBJ databases">
        <authorList>
            <consortium name="NIH - Mammalian Gene Collection (MGC) project"/>
        </authorList>
    </citation>
    <scope>NUCLEOTIDE SEQUENCE [LARGE SCALE MRNA]</scope>
    <source>
        <strain>Crossbred X Angus</strain>
        <tissue>Ileum</tissue>
    </source>
</reference>
<feature type="chain" id="PRO_0000321907" description="UPF0729 protein C18orf32 homolog">
    <location>
        <begin position="1"/>
        <end position="76"/>
    </location>
</feature>
<feature type="region of interest" description="Necessary for its localzation to the endoplasmic reticulum and lipid droplets" evidence="1">
    <location>
        <begin position="1"/>
        <end position="37"/>
    </location>
</feature>
<feature type="region of interest" description="Disordered" evidence="2">
    <location>
        <begin position="47"/>
        <end position="76"/>
    </location>
</feature>
<feature type="compositionally biased region" description="Basic and acidic residues" evidence="2">
    <location>
        <begin position="47"/>
        <end position="56"/>
    </location>
</feature>
<sequence>MVCIPCIVIPVLLWVYKKFLEPYIYPLISPFVSRMWPRKAIRETNDKNKGKVDYKGADINGLPTRGPTEMCDKKKD</sequence>